<organism>
    <name type="scientific">Wigglesworthia glossinidia brevipalpis</name>
    <dbReference type="NCBI Taxonomy" id="36870"/>
    <lineage>
        <taxon>Bacteria</taxon>
        <taxon>Pseudomonadati</taxon>
        <taxon>Pseudomonadota</taxon>
        <taxon>Gammaproteobacteria</taxon>
        <taxon>Enterobacterales</taxon>
        <taxon>Erwiniaceae</taxon>
        <taxon>Wigglesworthia</taxon>
    </lineage>
</organism>
<reference key="1">
    <citation type="journal article" date="2002" name="Nat. Genet.">
        <title>Genome sequence of the endocellular obligate symbiont of tsetse flies, Wigglesworthia glossinidia.</title>
        <authorList>
            <person name="Akman L."/>
            <person name="Yamashita A."/>
            <person name="Watanabe H."/>
            <person name="Oshima K."/>
            <person name="Shiba T."/>
            <person name="Hattori M."/>
            <person name="Aksoy S."/>
        </authorList>
    </citation>
    <scope>NUCLEOTIDE SEQUENCE [LARGE SCALE GENOMIC DNA]</scope>
</reference>
<protein>
    <recommendedName>
        <fullName evidence="1">Large ribosomal subunit protein bL28</fullName>
    </recommendedName>
    <alternativeName>
        <fullName evidence="3">50S ribosomal protein L28</fullName>
    </alternativeName>
</protein>
<feature type="chain" id="PRO_0000178589" description="Large ribosomal subunit protein bL28">
    <location>
        <begin position="1"/>
        <end position="78"/>
    </location>
</feature>
<feature type="region of interest" description="Disordered" evidence="2">
    <location>
        <begin position="1"/>
        <end position="23"/>
    </location>
</feature>
<comment type="similarity">
    <text evidence="1">Belongs to the bacterial ribosomal protein bL28 family.</text>
</comment>
<accession>Q8D2F1</accession>
<sequence>MSRICQITGKKPLSGNKRSHSMNAKKRKFFPNLHNHRFWLDKEKKFINLRISKQGLRLIDKYGIKKVMEKIKIKYKNV</sequence>
<gene>
    <name evidence="1" type="primary">rpmB</name>
    <name type="ordered locus">WIGBR4030</name>
</gene>
<keyword id="KW-1185">Reference proteome</keyword>
<keyword id="KW-0687">Ribonucleoprotein</keyword>
<keyword id="KW-0689">Ribosomal protein</keyword>
<proteinExistence type="inferred from homology"/>
<evidence type="ECO:0000255" key="1">
    <source>
        <dbReference type="HAMAP-Rule" id="MF_00373"/>
    </source>
</evidence>
<evidence type="ECO:0000256" key="2">
    <source>
        <dbReference type="SAM" id="MobiDB-lite"/>
    </source>
</evidence>
<evidence type="ECO:0000305" key="3"/>
<name>RL28_WIGBR</name>
<dbReference type="EMBL" id="BA000021">
    <property type="protein sequence ID" value="BAC24549.1"/>
    <property type="molecule type" value="Genomic_DNA"/>
</dbReference>
<dbReference type="SMR" id="Q8D2F1"/>
<dbReference type="STRING" id="36870.gene:10368904"/>
<dbReference type="KEGG" id="wbr:rpmB"/>
<dbReference type="eggNOG" id="COG0227">
    <property type="taxonomic scope" value="Bacteria"/>
</dbReference>
<dbReference type="HOGENOM" id="CLU_064548_3_1_6"/>
<dbReference type="OrthoDB" id="9805609at2"/>
<dbReference type="Proteomes" id="UP000000562">
    <property type="component" value="Chromosome"/>
</dbReference>
<dbReference type="GO" id="GO:0022625">
    <property type="term" value="C:cytosolic large ribosomal subunit"/>
    <property type="evidence" value="ECO:0007669"/>
    <property type="project" value="TreeGrafter"/>
</dbReference>
<dbReference type="GO" id="GO:0003735">
    <property type="term" value="F:structural constituent of ribosome"/>
    <property type="evidence" value="ECO:0007669"/>
    <property type="project" value="InterPro"/>
</dbReference>
<dbReference type="GO" id="GO:0006412">
    <property type="term" value="P:translation"/>
    <property type="evidence" value="ECO:0007669"/>
    <property type="project" value="UniProtKB-UniRule"/>
</dbReference>
<dbReference type="FunFam" id="2.30.170.40:FF:000001">
    <property type="entry name" value="50S ribosomal protein L28"/>
    <property type="match status" value="1"/>
</dbReference>
<dbReference type="Gene3D" id="2.30.170.40">
    <property type="entry name" value="Ribosomal protein L28/L24"/>
    <property type="match status" value="1"/>
</dbReference>
<dbReference type="HAMAP" id="MF_00373">
    <property type="entry name" value="Ribosomal_bL28"/>
    <property type="match status" value="1"/>
</dbReference>
<dbReference type="InterPro" id="IPR026569">
    <property type="entry name" value="Ribosomal_bL28"/>
</dbReference>
<dbReference type="InterPro" id="IPR034704">
    <property type="entry name" value="Ribosomal_bL28/bL31-like_sf"/>
</dbReference>
<dbReference type="InterPro" id="IPR001383">
    <property type="entry name" value="Ribosomal_bL28_bact-type"/>
</dbReference>
<dbReference type="InterPro" id="IPR037147">
    <property type="entry name" value="Ribosomal_bL28_sf"/>
</dbReference>
<dbReference type="NCBIfam" id="TIGR00009">
    <property type="entry name" value="L28"/>
    <property type="match status" value="1"/>
</dbReference>
<dbReference type="PANTHER" id="PTHR13528">
    <property type="entry name" value="39S RIBOSOMAL PROTEIN L28, MITOCHONDRIAL"/>
    <property type="match status" value="1"/>
</dbReference>
<dbReference type="PANTHER" id="PTHR13528:SF2">
    <property type="entry name" value="LARGE RIBOSOMAL SUBUNIT PROTEIN BL28M"/>
    <property type="match status" value="1"/>
</dbReference>
<dbReference type="Pfam" id="PF00830">
    <property type="entry name" value="Ribosomal_L28"/>
    <property type="match status" value="1"/>
</dbReference>
<dbReference type="SUPFAM" id="SSF143800">
    <property type="entry name" value="L28p-like"/>
    <property type="match status" value="1"/>
</dbReference>